<gene>
    <name type="ordered locus">Glyma18g48580</name>
</gene>
<organism>
    <name type="scientific">Glycine max</name>
    <name type="common">Soybean</name>
    <name type="synonym">Glycine hispida</name>
    <dbReference type="NCBI Taxonomy" id="3847"/>
    <lineage>
        <taxon>Eukaryota</taxon>
        <taxon>Viridiplantae</taxon>
        <taxon>Streptophyta</taxon>
        <taxon>Embryophyta</taxon>
        <taxon>Tracheophyta</taxon>
        <taxon>Spermatophyta</taxon>
        <taxon>Magnoliopsida</taxon>
        <taxon>eudicotyledons</taxon>
        <taxon>Gunneridae</taxon>
        <taxon>Pentapetalae</taxon>
        <taxon>rosids</taxon>
        <taxon>fabids</taxon>
        <taxon>Fabales</taxon>
        <taxon>Fabaceae</taxon>
        <taxon>Papilionoideae</taxon>
        <taxon>50 kb inversion clade</taxon>
        <taxon>NPAAA clade</taxon>
        <taxon>indigoferoid/millettioid clade</taxon>
        <taxon>Phaseoleae</taxon>
        <taxon>Glycine</taxon>
        <taxon>Glycine subgen. Soja</taxon>
    </lineage>
</organism>
<dbReference type="EC" id="3.4.21.-"/>
<dbReference type="SMR" id="I1N462"/>
<dbReference type="STRING" id="3847.I1N462"/>
<dbReference type="PaxDb" id="3847-GLYMA18G48580.1"/>
<dbReference type="HOGENOM" id="CLU_000625_4_6_1"/>
<dbReference type="InParanoid" id="I1N462"/>
<dbReference type="Proteomes" id="UP000008827">
    <property type="component" value="Unplaced"/>
</dbReference>
<dbReference type="GO" id="GO:0005576">
    <property type="term" value="C:extracellular region"/>
    <property type="evidence" value="ECO:0007669"/>
    <property type="project" value="UniProtKB-SubCell"/>
</dbReference>
<dbReference type="GO" id="GO:0004252">
    <property type="term" value="F:serine-type endopeptidase activity"/>
    <property type="evidence" value="ECO:0007669"/>
    <property type="project" value="InterPro"/>
</dbReference>
<dbReference type="GO" id="GO:0006508">
    <property type="term" value="P:proteolysis"/>
    <property type="evidence" value="ECO:0007669"/>
    <property type="project" value="UniProtKB-KW"/>
</dbReference>
<dbReference type="GO" id="GO:0009610">
    <property type="term" value="P:response to symbiotic fungus"/>
    <property type="evidence" value="ECO:0007669"/>
    <property type="project" value="UniProtKB-ARBA"/>
</dbReference>
<dbReference type="CDD" id="cd02120">
    <property type="entry name" value="PA_subtilisin_like"/>
    <property type="match status" value="1"/>
</dbReference>
<dbReference type="CDD" id="cd04852">
    <property type="entry name" value="Peptidases_S8_3"/>
    <property type="match status" value="1"/>
</dbReference>
<dbReference type="FunFam" id="2.60.40.2310:FF:000001">
    <property type="entry name" value="Subtilisin-like protease SBT1.5"/>
    <property type="match status" value="1"/>
</dbReference>
<dbReference type="FunFam" id="3.40.50.200:FF:000006">
    <property type="entry name" value="Subtilisin-like protease SBT1.5"/>
    <property type="match status" value="1"/>
</dbReference>
<dbReference type="FunFam" id="3.30.70.80:FF:000002">
    <property type="entry name" value="Subtilisin-like protease SBT5.3"/>
    <property type="match status" value="1"/>
</dbReference>
<dbReference type="Gene3D" id="2.60.40.2310">
    <property type="match status" value="1"/>
</dbReference>
<dbReference type="Gene3D" id="3.50.30.30">
    <property type="match status" value="1"/>
</dbReference>
<dbReference type="Gene3D" id="3.30.70.80">
    <property type="entry name" value="Peptidase S8 propeptide/proteinase inhibitor I9"/>
    <property type="match status" value="1"/>
</dbReference>
<dbReference type="Gene3D" id="3.40.50.200">
    <property type="entry name" value="Peptidase S8/S53 domain"/>
    <property type="match status" value="1"/>
</dbReference>
<dbReference type="InterPro" id="IPR003137">
    <property type="entry name" value="PA_domain"/>
</dbReference>
<dbReference type="InterPro" id="IPR000209">
    <property type="entry name" value="Peptidase_S8/S53_dom"/>
</dbReference>
<dbReference type="InterPro" id="IPR036852">
    <property type="entry name" value="Peptidase_S8/S53_dom_sf"/>
</dbReference>
<dbReference type="InterPro" id="IPR023828">
    <property type="entry name" value="Peptidase_S8_Ser-AS"/>
</dbReference>
<dbReference type="InterPro" id="IPR015500">
    <property type="entry name" value="Peptidase_S8_subtilisin-rel"/>
</dbReference>
<dbReference type="InterPro" id="IPR034197">
    <property type="entry name" value="Peptidases_S8_3"/>
</dbReference>
<dbReference type="InterPro" id="IPR010259">
    <property type="entry name" value="S8pro/Inhibitor_I9"/>
</dbReference>
<dbReference type="InterPro" id="IPR037045">
    <property type="entry name" value="S8pro/Inhibitor_I9_sf"/>
</dbReference>
<dbReference type="InterPro" id="IPR045051">
    <property type="entry name" value="SBT"/>
</dbReference>
<dbReference type="InterPro" id="IPR041469">
    <property type="entry name" value="Subtilisin-like_FN3"/>
</dbReference>
<dbReference type="PANTHER" id="PTHR10795">
    <property type="entry name" value="PROPROTEIN CONVERTASE SUBTILISIN/KEXIN"/>
    <property type="match status" value="1"/>
</dbReference>
<dbReference type="Pfam" id="PF17766">
    <property type="entry name" value="fn3_6"/>
    <property type="match status" value="1"/>
</dbReference>
<dbReference type="Pfam" id="PF05922">
    <property type="entry name" value="Inhibitor_I9"/>
    <property type="match status" value="1"/>
</dbReference>
<dbReference type="Pfam" id="PF02225">
    <property type="entry name" value="PA"/>
    <property type="match status" value="1"/>
</dbReference>
<dbReference type="Pfam" id="PF00082">
    <property type="entry name" value="Peptidase_S8"/>
    <property type="match status" value="1"/>
</dbReference>
<dbReference type="PRINTS" id="PR00723">
    <property type="entry name" value="SUBTILISIN"/>
</dbReference>
<dbReference type="SUPFAM" id="SSF52743">
    <property type="entry name" value="Subtilisin-like"/>
    <property type="match status" value="1"/>
</dbReference>
<dbReference type="PROSITE" id="PS51892">
    <property type="entry name" value="SUBTILASE"/>
    <property type="match status" value="1"/>
</dbReference>
<dbReference type="PROSITE" id="PS00138">
    <property type="entry name" value="SUBTILASE_SER"/>
    <property type="match status" value="1"/>
</dbReference>
<reference key="1">
    <citation type="journal article" date="2010" name="Proc. Natl. Acad. Sci. U.S.A.">
        <title>A subtilisin-like protein from soybean contains an embedded, cryptic signal that activates defense-related genes.</title>
        <authorList>
            <person name="Pearce G."/>
            <person name="Yamaguchi Y."/>
            <person name="Barona G."/>
            <person name="Ryan C.A."/>
        </authorList>
    </citation>
    <scope>NUCLEOTIDE SEQUENCE [MRNA]</scope>
    <scope>FUNCTION</scope>
    <scope>IDENTIFICATION BY MASS SPECTROMETRY</scope>
    <scope>TISSUE SPECIFICITY</scope>
    <scope>INDUCTION</scope>
    <source>
        <strain>cv. A3525</strain>
    </source>
</reference>
<reference key="2">
    <citation type="journal article" date="2010" name="Nature">
        <title>Genome sequence of the palaeopolyploid soybean.</title>
        <authorList>
            <person name="Schmutz J."/>
            <person name="Cannon S.B."/>
            <person name="Schlueter J."/>
            <person name="Ma J."/>
            <person name="Mitros T."/>
            <person name="Nelson W."/>
            <person name="Hyten D.L."/>
            <person name="Song Q."/>
            <person name="Thelen J.J."/>
            <person name="Cheng J."/>
            <person name="Xu D."/>
            <person name="Hellsten U."/>
            <person name="May G.D."/>
            <person name="Yu Y."/>
            <person name="Sakurai T."/>
            <person name="Umezawa T."/>
            <person name="Bhattacharyya M.K."/>
            <person name="Sandhu D."/>
            <person name="Valliyodan B."/>
            <person name="Lindquist E."/>
            <person name="Peto M."/>
            <person name="Grant D."/>
            <person name="Shu S."/>
            <person name="Goodstein D."/>
            <person name="Barry K."/>
            <person name="Futrell-Griggs M."/>
            <person name="Abernathy B."/>
            <person name="Du J."/>
            <person name="Tian Z."/>
            <person name="Zhu L."/>
            <person name="Gill N."/>
            <person name="Joshi T."/>
            <person name="Libault M."/>
            <person name="Sethuraman A."/>
            <person name="Zhang X.-C."/>
            <person name="Shinozaki K."/>
            <person name="Nguyen H.T."/>
            <person name="Wing R.A."/>
            <person name="Cregan P."/>
            <person name="Specht J."/>
            <person name="Grimwood J."/>
            <person name="Rokhsar D."/>
            <person name="Stacey G."/>
            <person name="Shoemaker R.C."/>
            <person name="Jackson S.A."/>
        </authorList>
    </citation>
    <scope>NUCLEOTIDE SEQUENCE [LARGE SCALE GENOMIC DNA]</scope>
    <source>
        <strain>cv. Williams 82</strain>
    </source>
</reference>
<reference key="3">
    <citation type="journal article" date="2011" name="Plant Physiol.">
        <title>GmPep914, an eight-amino acid peptide isolated from soybean leaves, activates defense-related genes.</title>
        <authorList>
            <person name="Yamaguchi Y."/>
            <person name="Barona G."/>
            <person name="Ryan C.A."/>
            <person name="Pearce G."/>
        </authorList>
    </citation>
    <scope>FUNCTION</scope>
    <source>
        <strain>cv. A3525</strain>
    </source>
</reference>
<name>SBT1_SOYBN</name>
<feature type="signal peptide" evidence="2">
    <location>
        <begin position="1"/>
        <end position="27"/>
    </location>
</feature>
<feature type="chain" id="PRO_0000430187" description="Subtilisin-like protease Glyma18g48580">
    <location>
        <begin position="28"/>
        <end position="789"/>
    </location>
</feature>
<feature type="peptide" id="PRO_0000430188" description="Subtilase peptide GmSubPep">
    <location>
        <begin position="471"/>
        <end position="482"/>
    </location>
</feature>
<feature type="domain" description="Inhibitor I9" evidence="2">
    <location>
        <begin position="32"/>
        <end position="116"/>
    </location>
</feature>
<feature type="domain" description="Peptidase S8" evidence="3">
    <location>
        <begin position="120"/>
        <end position="644"/>
    </location>
</feature>
<feature type="domain" description="PA">
    <location>
        <begin position="401"/>
        <end position="489"/>
    </location>
</feature>
<feature type="region of interest" description="Disordered" evidence="4">
    <location>
        <begin position="468"/>
        <end position="499"/>
    </location>
</feature>
<feature type="active site" description="Charge relay system" evidence="3">
    <location>
        <position position="150"/>
    </location>
</feature>
<feature type="active site" description="Charge relay system" evidence="3">
    <location>
        <position position="224"/>
    </location>
</feature>
<feature type="active site" description="Charge relay system" evidence="3">
    <location>
        <position position="576"/>
    </location>
</feature>
<evidence type="ECO:0000250" key="1"/>
<evidence type="ECO:0000255" key="2"/>
<evidence type="ECO:0000255" key="3">
    <source>
        <dbReference type="PROSITE-ProRule" id="PRU01240"/>
    </source>
</evidence>
<evidence type="ECO:0000256" key="4">
    <source>
        <dbReference type="SAM" id="MobiDB-lite"/>
    </source>
</evidence>
<evidence type="ECO:0000269" key="5">
    <source>
    </source>
</evidence>
<evidence type="ECO:0000269" key="6">
    <source>
    </source>
</evidence>
<evidence type="ECO:0000305" key="7">
    <source>
    </source>
</evidence>
<accession>I1N462</accession>
<sequence length="789" mass="85087">MGSSIFCLHLILSSFFLFTFLLAAVNGSKKCYIVYMGAHSHGPSPTSADLELATDSHYDLLGSIFGSREKAKEAIIYSYNRHINGFAALLEEEEAADIAKNPNVVSVFLSKEHKLHTTRSWEFLGLHRRGQNSAWQKGRFGENTIIGNIDTGVWPESQSFSDKGYGTVPSKWRGGLCQINKLPGSMKNTCNRKLIGARYYNKAFEAHNGQLDPLLHTARDFVGHGTHTLSTAGGNFVPGARVFAVGNGTAKGGSPRARVAAYKVCWSLTDPASCYGADVLAAIDQAIDDGVDVINVSFGVSYVVTAEGIFTDEISIGAFHAISKNILLVASAGNDGPTPGTVANVAPWVFTIAASTLDRDFSSNLTINNQLIEGASLFVNLPPNQAFSLILSTDAKLANATFRDAQLCRRGTLDRTKVNGKIVLCTREGKIKSVAEGLEALTAGARGMILNNQMQNGKTLSAEPHVFSTVNTPPRRAKSRPHGVKTTAIGDEDDPLKTGDTIKMSRARTLFGRKPAPVMASFSSRGPNKIQPSILKPDVTAPGVNILAAYSEFASASSLLVDNRRGFKFNVLQGTSMSCPHASGIAGLLKTRHPSWSPAAIKSAIMTTATTLDNTNRPIQDAFDKTLADAFAYGSGHVRPDLAIEPGLVYDLSLTDYLNFLCASGYDQQLISALNFNRTFICSGSHSVNDLNYPSITLPNLRLKPVTIARTVTNVGPPSTYTVSTRSPNGYSIAVVPPSLTFTKIGERKTFKVIVQASSAATRRKYEFGDLRWTDGKHIVRSPITVKRR</sequence>
<keyword id="KW-0378">Hydrolase</keyword>
<keyword id="KW-0645">Protease</keyword>
<keyword id="KW-1185">Reference proteome</keyword>
<keyword id="KW-0964">Secreted</keyword>
<keyword id="KW-0720">Serine protease</keyword>
<keyword id="KW-0732">Signal</keyword>
<protein>
    <recommendedName>
        <fullName>Subtilisin-like protease Glyma18g48580</fullName>
        <ecNumber>3.4.21.-</ecNumber>
    </recommendedName>
    <component>
        <recommendedName>
            <fullName>Subtilase peptide GmSubPep</fullName>
        </recommendedName>
        <alternativeName>
            <fullName>Glycine max subtilase peptide</fullName>
            <shortName>GmSubPep</shortName>
        </alternativeName>
    </component>
</protein>
<proteinExistence type="evidence at protein level"/>
<comment type="function">
    <molecule>Subtilase peptide GmSubPep</molecule>
    <text evidence="5 6">Produces a rapid alkalinization of the cellular media and the induction of defense-related genes, including chitinase 1b, chalcone synthase and CYP93A1. The receptor for GmSubPep is probably different from the receptor(s) for GmPep890 and GmPep914.</text>
</comment>
<comment type="subcellular location">
    <subcellularLocation>
        <location evidence="1">Secreted</location>
    </subcellularLocation>
</comment>
<comment type="tissue specificity">
    <text evidence="5">Expressed in roots, stems, flowers and young leaves. Barely detectable in matures leaves.</text>
</comment>
<comment type="induction">
    <text evidence="5">Not induced by wounding, methyl jasmonate, methyl salicylate or etephon.</text>
</comment>
<comment type="similarity">
    <text evidence="3">Belongs to the peptidase S8 family.</text>
</comment>
<comment type="caution">
    <text evidence="7">The full-length coding region in cv. A3525 has been amplified by RT-PCR and sequenced, but not submitted to the EMBL/GenBank/DDBJ databases (PubMed:20679205).</text>
</comment>